<gene>
    <name evidence="1" type="primary">flpA</name>
    <name type="ordered locus">Ta0949</name>
</gene>
<keyword id="KW-0489">Methyltransferase</keyword>
<keyword id="KW-1185">Reference proteome</keyword>
<keyword id="KW-0694">RNA-binding</keyword>
<keyword id="KW-0698">rRNA processing</keyword>
<keyword id="KW-0808">Transferase</keyword>
<keyword id="KW-0819">tRNA processing</keyword>
<evidence type="ECO:0000255" key="1">
    <source>
        <dbReference type="HAMAP-Rule" id="MF_00351"/>
    </source>
</evidence>
<accession>Q9HJL8</accession>
<name>FLPA_THEAC</name>
<protein>
    <recommendedName>
        <fullName evidence="1">Fibrillarin-like rRNA/tRNA 2'-O-methyltransferase</fullName>
        <ecNumber evidence="1">2.1.1.-</ecNumber>
    </recommendedName>
</protein>
<proteinExistence type="inferred from homology"/>
<feature type="chain" id="PRO_0000148551" description="Fibrillarin-like rRNA/tRNA 2'-O-methyltransferase">
    <location>
        <begin position="1"/>
        <end position="230"/>
    </location>
</feature>
<feature type="binding site" evidence="1">
    <location>
        <begin position="89"/>
        <end position="90"/>
    </location>
    <ligand>
        <name>S-adenosyl-L-methionine</name>
        <dbReference type="ChEBI" id="CHEBI:59789"/>
    </ligand>
</feature>
<feature type="binding site" evidence="1">
    <location>
        <begin position="107"/>
        <end position="108"/>
    </location>
    <ligand>
        <name>S-adenosyl-L-methionine</name>
        <dbReference type="ChEBI" id="CHEBI:59789"/>
    </ligand>
</feature>
<feature type="binding site" evidence="1">
    <location>
        <begin position="132"/>
        <end position="133"/>
    </location>
    <ligand>
        <name>S-adenosyl-L-methionine</name>
        <dbReference type="ChEBI" id="CHEBI:59789"/>
    </ligand>
</feature>
<feature type="binding site" evidence="1">
    <location>
        <begin position="152"/>
        <end position="155"/>
    </location>
    <ligand>
        <name>S-adenosyl-L-methionine</name>
        <dbReference type="ChEBI" id="CHEBI:59789"/>
    </ligand>
</feature>
<organism>
    <name type="scientific">Thermoplasma acidophilum (strain ATCC 25905 / DSM 1728 / JCM 9062 / NBRC 15155 / AMRC-C165)</name>
    <dbReference type="NCBI Taxonomy" id="273075"/>
    <lineage>
        <taxon>Archaea</taxon>
        <taxon>Methanobacteriati</taxon>
        <taxon>Thermoplasmatota</taxon>
        <taxon>Thermoplasmata</taxon>
        <taxon>Thermoplasmatales</taxon>
        <taxon>Thermoplasmataceae</taxon>
        <taxon>Thermoplasma</taxon>
    </lineage>
</organism>
<comment type="function">
    <text evidence="1">Involved in pre-rRNA and tRNA processing. Utilizes the methyl donor S-adenosyl-L-methionine to catalyze the site-specific 2'-hydroxyl methylation of ribose moieties in rRNA and tRNA. Site specificity is provided by a guide RNA that base pairs with the substrate. Methylation occurs at a characteristic distance from the sequence involved in base pairing with the guide RNA.</text>
</comment>
<comment type="subunit">
    <text evidence="1">Interacts with nop5. Component of box C/D small ribonucleoprotein (sRNP) particles that contain rpl7ae, FlpA and nop5, plus a guide RNA.</text>
</comment>
<comment type="similarity">
    <text evidence="1">Belongs to the methyltransferase superfamily. Fibrillarin family.</text>
</comment>
<reference key="1">
    <citation type="journal article" date="2000" name="Nature">
        <title>The genome sequence of the thermoacidophilic scavenger Thermoplasma acidophilum.</title>
        <authorList>
            <person name="Ruepp A."/>
            <person name="Graml W."/>
            <person name="Santos-Martinez M.-L."/>
            <person name="Koretke K.K."/>
            <person name="Volker C."/>
            <person name="Mewes H.-W."/>
            <person name="Frishman D."/>
            <person name="Stocker S."/>
            <person name="Lupas A.N."/>
            <person name="Baumeister W."/>
        </authorList>
    </citation>
    <scope>NUCLEOTIDE SEQUENCE [LARGE SCALE GENOMIC DNA]</scope>
    <source>
        <strain>ATCC 25905 / DSM 1728 / JCM 9062 / NBRC 15155 / AMRC-C165</strain>
    </source>
</reference>
<sequence length="230" mass="26654">MQEKIRRKSSQPVYLYGMKNMLRIGNKLYTRTSKNKKVYGEDIIRFEHANYREWRPDRSKLAAAILKGLHNMPIGESSSILYLGASTGTTVSHVSDIAPSGRIYAVEVAYEPFSKLLDLAEQRDNIYPILEDANLPERYRFFVDHVDVIYQDISQRNQIAIFKRNMDEFQPRSAFLVLKTRSIASTEDAKTILRKTIEQLSSYNIREVIDLSPYDTDHYLILVDAKGVRR</sequence>
<dbReference type="EC" id="2.1.1.-" evidence="1"/>
<dbReference type="EMBL" id="AL445066">
    <property type="protein sequence ID" value="CAC12078.1"/>
    <property type="molecule type" value="Genomic_DNA"/>
</dbReference>
<dbReference type="RefSeq" id="WP_010901360.1">
    <property type="nucleotide sequence ID" value="NC_002578.1"/>
</dbReference>
<dbReference type="SMR" id="Q9HJL8"/>
<dbReference type="FunCoup" id="Q9HJL8">
    <property type="interactions" value="149"/>
</dbReference>
<dbReference type="STRING" id="273075.gene:9572167"/>
<dbReference type="PaxDb" id="273075-Ta0949"/>
<dbReference type="EnsemblBacteria" id="CAC12078">
    <property type="protein sequence ID" value="CAC12078"/>
    <property type="gene ID" value="CAC12078"/>
</dbReference>
<dbReference type="KEGG" id="tac:Ta0949"/>
<dbReference type="eggNOG" id="arCOG00078">
    <property type="taxonomic scope" value="Archaea"/>
</dbReference>
<dbReference type="HOGENOM" id="CLU_059055_2_0_2"/>
<dbReference type="InParanoid" id="Q9HJL8"/>
<dbReference type="OrthoDB" id="6244at2157"/>
<dbReference type="Proteomes" id="UP000001024">
    <property type="component" value="Chromosome"/>
</dbReference>
<dbReference type="GO" id="GO:1990259">
    <property type="term" value="F:histone H2AQ104 methyltransferase activity"/>
    <property type="evidence" value="ECO:0007669"/>
    <property type="project" value="TreeGrafter"/>
</dbReference>
<dbReference type="GO" id="GO:0003723">
    <property type="term" value="F:RNA binding"/>
    <property type="evidence" value="ECO:0007669"/>
    <property type="project" value="UniProtKB-UniRule"/>
</dbReference>
<dbReference type="GO" id="GO:0008649">
    <property type="term" value="F:rRNA methyltransferase activity"/>
    <property type="evidence" value="ECO:0007669"/>
    <property type="project" value="TreeGrafter"/>
</dbReference>
<dbReference type="GO" id="GO:0000494">
    <property type="term" value="P:box C/D sno(s)RNA 3'-end processing"/>
    <property type="evidence" value="ECO:0007669"/>
    <property type="project" value="TreeGrafter"/>
</dbReference>
<dbReference type="GO" id="GO:0008033">
    <property type="term" value="P:tRNA processing"/>
    <property type="evidence" value="ECO:0007669"/>
    <property type="project" value="UniProtKB-UniRule"/>
</dbReference>
<dbReference type="Gene3D" id="3.40.50.150">
    <property type="entry name" value="Vaccinia Virus protein VP39"/>
    <property type="match status" value="1"/>
</dbReference>
<dbReference type="HAMAP" id="MF_00351">
    <property type="entry name" value="RNA_methyltransf_FlpA"/>
    <property type="match status" value="1"/>
</dbReference>
<dbReference type="InterPro" id="IPR000692">
    <property type="entry name" value="Fibrillarin"/>
</dbReference>
<dbReference type="InterPro" id="IPR020813">
    <property type="entry name" value="Fibrillarin_CS"/>
</dbReference>
<dbReference type="InterPro" id="IPR029063">
    <property type="entry name" value="SAM-dependent_MTases_sf"/>
</dbReference>
<dbReference type="NCBIfam" id="NF003276">
    <property type="entry name" value="PRK04266.1-2"/>
    <property type="match status" value="1"/>
</dbReference>
<dbReference type="PANTHER" id="PTHR10335:SF17">
    <property type="entry name" value="FIBRILLARIN"/>
    <property type="match status" value="1"/>
</dbReference>
<dbReference type="PANTHER" id="PTHR10335">
    <property type="entry name" value="RRNA 2-O-METHYLTRANSFERASE FIBRILLARIN"/>
    <property type="match status" value="1"/>
</dbReference>
<dbReference type="Pfam" id="PF01269">
    <property type="entry name" value="Fibrillarin"/>
    <property type="match status" value="1"/>
</dbReference>
<dbReference type="PIRSF" id="PIRSF006540">
    <property type="entry name" value="Nop17p"/>
    <property type="match status" value="1"/>
</dbReference>
<dbReference type="PRINTS" id="PR00052">
    <property type="entry name" value="FIBRILLARIN"/>
</dbReference>
<dbReference type="SMART" id="SM01206">
    <property type="entry name" value="Fibrillarin"/>
    <property type="match status" value="1"/>
</dbReference>
<dbReference type="SUPFAM" id="SSF53335">
    <property type="entry name" value="S-adenosyl-L-methionine-dependent methyltransferases"/>
    <property type="match status" value="1"/>
</dbReference>
<dbReference type="PROSITE" id="PS00566">
    <property type="entry name" value="FIBRILLARIN"/>
    <property type="match status" value="1"/>
</dbReference>